<organism>
    <name type="scientific">Fowlpox virus (strain NVSL)</name>
    <name type="common">FPV</name>
    <dbReference type="NCBI Taxonomy" id="928301"/>
    <lineage>
        <taxon>Viruses</taxon>
        <taxon>Varidnaviria</taxon>
        <taxon>Bamfordvirae</taxon>
        <taxon>Nucleocytoviricota</taxon>
        <taxon>Pokkesviricetes</taxon>
        <taxon>Chitovirales</taxon>
        <taxon>Poxviridae</taxon>
        <taxon>Chordopoxvirinae</taxon>
        <taxon>Avipoxvirus</taxon>
        <taxon>Fowlpox virus</taxon>
    </lineage>
</organism>
<gene>
    <name type="ordered locus">FPV175</name>
</gene>
<name>A11_FOWPN</name>
<accession>Q9J558</accession>
<evidence type="ECO:0000250" key="1"/>
<evidence type="ECO:0000255" key="2"/>
<evidence type="ECO:0000305" key="3"/>
<comment type="function">
    <text evidence="1">Required for viral crescent formation early during virus morphogenesis.</text>
</comment>
<comment type="subunit">
    <text evidence="1">Homomultimer. Interacts with A32.</text>
</comment>
<comment type="subcellular location">
    <subcellularLocation>
        <location evidence="1">Host cytoplasm</location>
    </subcellularLocation>
    <text evidence="1">Localizes to the cytoplasmic viral factory. Not incorporated into virus particles. Does not seem to be a transmembrane protein (By similarity).</text>
</comment>
<comment type="induction">
    <text>Expressed in the late phase of the viral replicative cycle.</text>
</comment>
<comment type="PTM">
    <text evidence="1">Phosphorylated by a F10-independent mechanism.</text>
</comment>
<comment type="similarity">
    <text evidence="3">Belongs to the poxviridae A11 family.</text>
</comment>
<organismHost>
    <name type="scientific">Vertebrata</name>
    <dbReference type="NCBI Taxonomy" id="7742"/>
</organismHost>
<reference key="1">
    <citation type="journal article" date="2000" name="J. Virol.">
        <title>The genome of fowlpox virus.</title>
        <authorList>
            <person name="Afonso C.L."/>
            <person name="Tulman E.R."/>
            <person name="Lu Z."/>
            <person name="Zsak L."/>
            <person name="Kutish G.F."/>
            <person name="Rock D.L."/>
        </authorList>
    </citation>
    <scope>NUCLEOTIDE SEQUENCE [LARGE SCALE GENOMIC DNA]</scope>
</reference>
<sequence>MTGLMVTDITNIAKEYNLTAFSEDVYPCNKNYELTNGQLSALKTINVVLTTRSDNYEKDVTYNDDDDHDRCIVSEIGSHHSFNDEKDNYIQSNNIQQTPSLSAVFDDNKRVHLLEQEIAELRKKKTKSKNLLDFTNTLFNKNPLRIGILNKRAIILNYASMNNSPLTMEDLEACEDEEIENMYISIKQYHEVHKKKLIVTNIISILISVIEQLLVRIGFDEIKGLSKEVTSTIIDLEIGEDCEQLATKMGVANNPVINISLFILKIFIRRINIL</sequence>
<dbReference type="EMBL" id="AF198100">
    <property type="protein sequence ID" value="AAF44519.1"/>
    <property type="molecule type" value="Genomic_DNA"/>
</dbReference>
<dbReference type="RefSeq" id="NP_039138.1">
    <property type="nucleotide sequence ID" value="NC_002188.1"/>
</dbReference>
<dbReference type="GeneID" id="1486723"/>
<dbReference type="KEGG" id="vg:1486723"/>
<dbReference type="Proteomes" id="UP000008597">
    <property type="component" value="Segment"/>
</dbReference>
<dbReference type="GO" id="GO:0030430">
    <property type="term" value="C:host cell cytoplasm"/>
    <property type="evidence" value="ECO:0007669"/>
    <property type="project" value="UniProtKB-SubCell"/>
</dbReference>
<dbReference type="InterPro" id="IPR007755">
    <property type="entry name" value="Poxvirus_A11"/>
</dbReference>
<dbReference type="Pfam" id="PF05061">
    <property type="entry name" value="Pox_A11"/>
    <property type="match status" value="2"/>
</dbReference>
<protein>
    <recommendedName>
        <fullName>Protein A11 homolog</fullName>
    </recommendedName>
</protein>
<keyword id="KW-0175">Coiled coil</keyword>
<keyword id="KW-1035">Host cytoplasm</keyword>
<keyword id="KW-0426">Late protein</keyword>
<keyword id="KW-0597">Phosphoprotein</keyword>
<keyword id="KW-1185">Reference proteome</keyword>
<proteinExistence type="evidence at transcript level"/>
<feature type="chain" id="PRO_0000099234" description="Protein A11 homolog">
    <location>
        <begin position="1"/>
        <end position="274"/>
    </location>
</feature>
<feature type="coiled-coil region" evidence="2">
    <location>
        <begin position="106"/>
        <end position="136"/>
    </location>
</feature>